<evidence type="ECO:0000255" key="1">
    <source>
        <dbReference type="HAMAP-Rule" id="MF_01595"/>
    </source>
</evidence>
<comment type="function">
    <text evidence="1">Involved in mRNA degradation. Catalyzes the phosphorolysis of single-stranded polyribonucleotides processively in the 3'- to 5'-direction.</text>
</comment>
<comment type="catalytic activity">
    <reaction evidence="1">
        <text>RNA(n+1) + phosphate = RNA(n) + a ribonucleoside 5'-diphosphate</text>
        <dbReference type="Rhea" id="RHEA:22096"/>
        <dbReference type="Rhea" id="RHEA-COMP:14527"/>
        <dbReference type="Rhea" id="RHEA-COMP:17342"/>
        <dbReference type="ChEBI" id="CHEBI:43474"/>
        <dbReference type="ChEBI" id="CHEBI:57930"/>
        <dbReference type="ChEBI" id="CHEBI:140395"/>
        <dbReference type="EC" id="2.7.7.8"/>
    </reaction>
</comment>
<comment type="cofactor">
    <cofactor evidence="1">
        <name>Mg(2+)</name>
        <dbReference type="ChEBI" id="CHEBI:18420"/>
    </cofactor>
</comment>
<comment type="subunit">
    <text evidence="1">Component of the RNA degradosome, which is a multiprotein complex involved in RNA processing and mRNA degradation.</text>
</comment>
<comment type="subcellular location">
    <subcellularLocation>
        <location evidence="1">Cytoplasm</location>
    </subcellularLocation>
</comment>
<comment type="similarity">
    <text evidence="1">Belongs to the polyribonucleotide nucleotidyltransferase family.</text>
</comment>
<proteinExistence type="inferred from homology"/>
<reference key="1">
    <citation type="submission" date="2007-08" db="EMBL/GenBank/DDBJ databases">
        <title>Complete sequence of Shewanella sediminis HAW-EB3.</title>
        <authorList>
            <consortium name="US DOE Joint Genome Institute"/>
            <person name="Copeland A."/>
            <person name="Lucas S."/>
            <person name="Lapidus A."/>
            <person name="Barry K."/>
            <person name="Glavina del Rio T."/>
            <person name="Dalin E."/>
            <person name="Tice H."/>
            <person name="Pitluck S."/>
            <person name="Chertkov O."/>
            <person name="Brettin T."/>
            <person name="Bruce D."/>
            <person name="Detter J.C."/>
            <person name="Han C."/>
            <person name="Schmutz J."/>
            <person name="Larimer F."/>
            <person name="Land M."/>
            <person name="Hauser L."/>
            <person name="Kyrpides N."/>
            <person name="Kim E."/>
            <person name="Zhao J.-S."/>
            <person name="Richardson P."/>
        </authorList>
    </citation>
    <scope>NUCLEOTIDE SEQUENCE [LARGE SCALE GENOMIC DNA]</scope>
    <source>
        <strain>HAW-EB3</strain>
    </source>
</reference>
<name>PNP_SHESH</name>
<sequence length="704" mass="75810">MVHVNPIVKSFEYGQHTVTLETGVIARQADAAVLASMGDTTVLVTVVGKKFEEPGRDFFPLTVNYQEKTYAAGKIPGGFFKREGRPSESETLIARLIDRPIRPLFPNGFKNEVQVIITVVSVDPEINPDVISMIGTSAALAISGLPFNGPLGVARVGYTDGEYVLNPNVSQLVDSDLDLIVAGTQGAVLMVESEAAALPEEVMLGGVVYGHDQQQVVISAINELKAEASKPAWDWTAPVQDADLVAKIKDLAEAEMAAAYQIEVKQDRYTQVGVVKSAAKEALLAENPEADLREIDGLLGSLEKQVVRSRIIAGNPRIDGREPDMVRGLNVMAGVLPRTHGSALFTRGETQALVTCTLGTERDAQKVDSIMGEYTNRFMLHYNFPPYSVGETGFVGSPKRREIGHGKLAWRGINAVMPSAEEFPYSVRVVSEITESNGSSSMASVCGTSLALMDAGVPIKTSVAGIAMGLVKEGDDFVVLSDILGDEDHLGDMDFKVAGTRDGITALQMDIKIEGINKEIMQIALQQAYGARVHILNVMDQAIGEHRDDISDHAPRITTLKINPEKIRDVIGKGGATIRALTEETGTTIELEDDGTVKIASANGDATKEAIRRIEEITAEVEVGTIYNGKVVRIVDFGAFVTILPGKDGLVHISQIAEERVANVSDYLQVGQEVKVKVMEVDRQGRVRLSMKEAAPKAEAAPAE</sequence>
<protein>
    <recommendedName>
        <fullName evidence="1">Polyribonucleotide nucleotidyltransferase</fullName>
        <ecNumber evidence="1">2.7.7.8</ecNumber>
    </recommendedName>
    <alternativeName>
        <fullName evidence="1">Polynucleotide phosphorylase</fullName>
        <shortName evidence="1">PNPase</shortName>
    </alternativeName>
</protein>
<dbReference type="EC" id="2.7.7.8" evidence="1"/>
<dbReference type="EMBL" id="CP000821">
    <property type="protein sequence ID" value="ABV37988.1"/>
    <property type="molecule type" value="Genomic_DNA"/>
</dbReference>
<dbReference type="SMR" id="A8FYR5"/>
<dbReference type="STRING" id="425104.Ssed_3384"/>
<dbReference type="KEGG" id="sse:Ssed_3384"/>
<dbReference type="eggNOG" id="COG1185">
    <property type="taxonomic scope" value="Bacteria"/>
</dbReference>
<dbReference type="HOGENOM" id="CLU_004217_2_2_6"/>
<dbReference type="Proteomes" id="UP000002015">
    <property type="component" value="Chromosome"/>
</dbReference>
<dbReference type="GO" id="GO:0005829">
    <property type="term" value="C:cytosol"/>
    <property type="evidence" value="ECO:0007669"/>
    <property type="project" value="TreeGrafter"/>
</dbReference>
<dbReference type="GO" id="GO:0000175">
    <property type="term" value="F:3'-5'-RNA exonuclease activity"/>
    <property type="evidence" value="ECO:0007669"/>
    <property type="project" value="TreeGrafter"/>
</dbReference>
<dbReference type="GO" id="GO:0000287">
    <property type="term" value="F:magnesium ion binding"/>
    <property type="evidence" value="ECO:0007669"/>
    <property type="project" value="UniProtKB-UniRule"/>
</dbReference>
<dbReference type="GO" id="GO:0004654">
    <property type="term" value="F:polyribonucleotide nucleotidyltransferase activity"/>
    <property type="evidence" value="ECO:0007669"/>
    <property type="project" value="UniProtKB-UniRule"/>
</dbReference>
<dbReference type="GO" id="GO:0003723">
    <property type="term" value="F:RNA binding"/>
    <property type="evidence" value="ECO:0007669"/>
    <property type="project" value="UniProtKB-UniRule"/>
</dbReference>
<dbReference type="GO" id="GO:0006402">
    <property type="term" value="P:mRNA catabolic process"/>
    <property type="evidence" value="ECO:0007669"/>
    <property type="project" value="UniProtKB-UniRule"/>
</dbReference>
<dbReference type="GO" id="GO:0006396">
    <property type="term" value="P:RNA processing"/>
    <property type="evidence" value="ECO:0007669"/>
    <property type="project" value="InterPro"/>
</dbReference>
<dbReference type="CDD" id="cd02393">
    <property type="entry name" value="KH-I_PNPase"/>
    <property type="match status" value="1"/>
</dbReference>
<dbReference type="CDD" id="cd11363">
    <property type="entry name" value="RNase_PH_PNPase_1"/>
    <property type="match status" value="1"/>
</dbReference>
<dbReference type="CDD" id="cd11364">
    <property type="entry name" value="RNase_PH_PNPase_2"/>
    <property type="match status" value="1"/>
</dbReference>
<dbReference type="CDD" id="cd04472">
    <property type="entry name" value="S1_PNPase"/>
    <property type="match status" value="1"/>
</dbReference>
<dbReference type="FunFam" id="2.40.50.140:FF:000023">
    <property type="entry name" value="Polyribonucleotide nucleotidyltransferase"/>
    <property type="match status" value="1"/>
</dbReference>
<dbReference type="FunFam" id="3.30.1370.10:FF:000001">
    <property type="entry name" value="Polyribonucleotide nucleotidyltransferase"/>
    <property type="match status" value="1"/>
</dbReference>
<dbReference type="FunFam" id="3.30.230.70:FF:000001">
    <property type="entry name" value="Polyribonucleotide nucleotidyltransferase"/>
    <property type="match status" value="1"/>
</dbReference>
<dbReference type="FunFam" id="3.30.230.70:FF:000002">
    <property type="entry name" value="Polyribonucleotide nucleotidyltransferase"/>
    <property type="match status" value="1"/>
</dbReference>
<dbReference type="Gene3D" id="3.30.230.70">
    <property type="entry name" value="GHMP Kinase, N-terminal domain"/>
    <property type="match status" value="2"/>
</dbReference>
<dbReference type="Gene3D" id="3.30.1370.10">
    <property type="entry name" value="K Homology domain, type 1"/>
    <property type="match status" value="1"/>
</dbReference>
<dbReference type="Gene3D" id="2.40.50.140">
    <property type="entry name" value="Nucleic acid-binding proteins"/>
    <property type="match status" value="1"/>
</dbReference>
<dbReference type="HAMAP" id="MF_01595">
    <property type="entry name" value="PNPase"/>
    <property type="match status" value="1"/>
</dbReference>
<dbReference type="InterPro" id="IPR001247">
    <property type="entry name" value="ExoRNase_PH_dom1"/>
</dbReference>
<dbReference type="InterPro" id="IPR015847">
    <property type="entry name" value="ExoRNase_PH_dom2"/>
</dbReference>
<dbReference type="InterPro" id="IPR036345">
    <property type="entry name" value="ExoRNase_PH_dom2_sf"/>
</dbReference>
<dbReference type="InterPro" id="IPR004087">
    <property type="entry name" value="KH_dom"/>
</dbReference>
<dbReference type="InterPro" id="IPR004088">
    <property type="entry name" value="KH_dom_type_1"/>
</dbReference>
<dbReference type="InterPro" id="IPR036612">
    <property type="entry name" value="KH_dom_type_1_sf"/>
</dbReference>
<dbReference type="InterPro" id="IPR012340">
    <property type="entry name" value="NA-bd_OB-fold"/>
</dbReference>
<dbReference type="InterPro" id="IPR012162">
    <property type="entry name" value="PNPase"/>
</dbReference>
<dbReference type="InterPro" id="IPR027408">
    <property type="entry name" value="PNPase/RNase_PH_dom_sf"/>
</dbReference>
<dbReference type="InterPro" id="IPR015848">
    <property type="entry name" value="PNPase_PH_RNA-bd_bac/org-type"/>
</dbReference>
<dbReference type="InterPro" id="IPR036456">
    <property type="entry name" value="PNPase_PH_RNA-bd_sf"/>
</dbReference>
<dbReference type="InterPro" id="IPR020568">
    <property type="entry name" value="Ribosomal_Su5_D2-typ_SF"/>
</dbReference>
<dbReference type="InterPro" id="IPR003029">
    <property type="entry name" value="S1_domain"/>
</dbReference>
<dbReference type="NCBIfam" id="TIGR03591">
    <property type="entry name" value="polynuc_phos"/>
    <property type="match status" value="1"/>
</dbReference>
<dbReference type="NCBIfam" id="NF008805">
    <property type="entry name" value="PRK11824.1"/>
    <property type="match status" value="1"/>
</dbReference>
<dbReference type="PANTHER" id="PTHR11252">
    <property type="entry name" value="POLYRIBONUCLEOTIDE NUCLEOTIDYLTRANSFERASE"/>
    <property type="match status" value="1"/>
</dbReference>
<dbReference type="PANTHER" id="PTHR11252:SF0">
    <property type="entry name" value="POLYRIBONUCLEOTIDE NUCLEOTIDYLTRANSFERASE 1, MITOCHONDRIAL"/>
    <property type="match status" value="1"/>
</dbReference>
<dbReference type="Pfam" id="PF00013">
    <property type="entry name" value="KH_1"/>
    <property type="match status" value="1"/>
</dbReference>
<dbReference type="Pfam" id="PF03726">
    <property type="entry name" value="PNPase"/>
    <property type="match status" value="1"/>
</dbReference>
<dbReference type="Pfam" id="PF01138">
    <property type="entry name" value="RNase_PH"/>
    <property type="match status" value="2"/>
</dbReference>
<dbReference type="Pfam" id="PF03725">
    <property type="entry name" value="RNase_PH_C"/>
    <property type="match status" value="2"/>
</dbReference>
<dbReference type="Pfam" id="PF00575">
    <property type="entry name" value="S1"/>
    <property type="match status" value="1"/>
</dbReference>
<dbReference type="PIRSF" id="PIRSF005499">
    <property type="entry name" value="PNPase"/>
    <property type="match status" value="1"/>
</dbReference>
<dbReference type="SMART" id="SM00322">
    <property type="entry name" value="KH"/>
    <property type="match status" value="1"/>
</dbReference>
<dbReference type="SMART" id="SM00316">
    <property type="entry name" value="S1"/>
    <property type="match status" value="1"/>
</dbReference>
<dbReference type="SUPFAM" id="SSF54791">
    <property type="entry name" value="Eukaryotic type KH-domain (KH-domain type I)"/>
    <property type="match status" value="1"/>
</dbReference>
<dbReference type="SUPFAM" id="SSF50249">
    <property type="entry name" value="Nucleic acid-binding proteins"/>
    <property type="match status" value="1"/>
</dbReference>
<dbReference type="SUPFAM" id="SSF46915">
    <property type="entry name" value="Polynucleotide phosphorylase/guanosine pentaphosphate synthase (PNPase/GPSI), domain 3"/>
    <property type="match status" value="1"/>
</dbReference>
<dbReference type="SUPFAM" id="SSF55666">
    <property type="entry name" value="Ribonuclease PH domain 2-like"/>
    <property type="match status" value="2"/>
</dbReference>
<dbReference type="SUPFAM" id="SSF54211">
    <property type="entry name" value="Ribosomal protein S5 domain 2-like"/>
    <property type="match status" value="2"/>
</dbReference>
<dbReference type="PROSITE" id="PS50084">
    <property type="entry name" value="KH_TYPE_1"/>
    <property type="match status" value="1"/>
</dbReference>
<dbReference type="PROSITE" id="PS50126">
    <property type="entry name" value="S1"/>
    <property type="match status" value="1"/>
</dbReference>
<feature type="chain" id="PRO_0000381920" description="Polyribonucleotide nucleotidyltransferase">
    <location>
        <begin position="1"/>
        <end position="704"/>
    </location>
</feature>
<feature type="domain" description="KH" evidence="1">
    <location>
        <begin position="555"/>
        <end position="614"/>
    </location>
</feature>
<feature type="domain" description="S1 motif" evidence="1">
    <location>
        <begin position="624"/>
        <end position="692"/>
    </location>
</feature>
<feature type="binding site" evidence="1">
    <location>
        <position position="488"/>
    </location>
    <ligand>
        <name>Mg(2+)</name>
        <dbReference type="ChEBI" id="CHEBI:18420"/>
    </ligand>
</feature>
<feature type="binding site" evidence="1">
    <location>
        <position position="494"/>
    </location>
    <ligand>
        <name>Mg(2+)</name>
        <dbReference type="ChEBI" id="CHEBI:18420"/>
    </ligand>
</feature>
<gene>
    <name evidence="1" type="primary">pnp</name>
    <name type="ordered locus">Ssed_3384</name>
</gene>
<keyword id="KW-0963">Cytoplasm</keyword>
<keyword id="KW-0460">Magnesium</keyword>
<keyword id="KW-0479">Metal-binding</keyword>
<keyword id="KW-0548">Nucleotidyltransferase</keyword>
<keyword id="KW-1185">Reference proteome</keyword>
<keyword id="KW-0694">RNA-binding</keyword>
<keyword id="KW-0808">Transferase</keyword>
<organism>
    <name type="scientific">Shewanella sediminis (strain HAW-EB3)</name>
    <dbReference type="NCBI Taxonomy" id="425104"/>
    <lineage>
        <taxon>Bacteria</taxon>
        <taxon>Pseudomonadati</taxon>
        <taxon>Pseudomonadota</taxon>
        <taxon>Gammaproteobacteria</taxon>
        <taxon>Alteromonadales</taxon>
        <taxon>Shewanellaceae</taxon>
        <taxon>Shewanella</taxon>
    </lineage>
</organism>
<accession>A8FYR5</accession>